<gene>
    <name evidence="1" type="primary">atpH</name>
</gene>
<accession>P41603</accession>
<proteinExistence type="inferred from homology"/>
<organism>
    <name type="scientific">Pinus thunbergii</name>
    <name type="common">Japanese black pine</name>
    <name type="synonym">Pinus thunbergiana</name>
    <dbReference type="NCBI Taxonomy" id="3350"/>
    <lineage>
        <taxon>Eukaryota</taxon>
        <taxon>Viridiplantae</taxon>
        <taxon>Streptophyta</taxon>
        <taxon>Embryophyta</taxon>
        <taxon>Tracheophyta</taxon>
        <taxon>Spermatophyta</taxon>
        <taxon>Pinopsida</taxon>
        <taxon>Pinidae</taxon>
        <taxon>Conifers I</taxon>
        <taxon>Pinales</taxon>
        <taxon>Pinaceae</taxon>
        <taxon>Pinus</taxon>
        <taxon>Pinus subgen. Pinus</taxon>
    </lineage>
</organism>
<protein>
    <recommendedName>
        <fullName evidence="1">ATP synthase subunit c, chloroplastic</fullName>
    </recommendedName>
    <alternativeName>
        <fullName evidence="1">ATP synthase F(0) sector subunit c</fullName>
    </alternativeName>
    <alternativeName>
        <fullName evidence="1">ATPase subunit III</fullName>
    </alternativeName>
    <alternativeName>
        <fullName evidence="1">F-type ATPase subunit c</fullName>
        <shortName evidence="1">F-ATPase subunit c</shortName>
    </alternativeName>
    <alternativeName>
        <fullName evidence="1">Lipid-binding protein</fullName>
    </alternativeName>
</protein>
<keyword id="KW-0066">ATP synthesis</keyword>
<keyword id="KW-0138">CF(0)</keyword>
<keyword id="KW-0150">Chloroplast</keyword>
<keyword id="KW-0375">Hydrogen ion transport</keyword>
<keyword id="KW-0406">Ion transport</keyword>
<keyword id="KW-0446">Lipid-binding</keyword>
<keyword id="KW-0472">Membrane</keyword>
<keyword id="KW-0934">Plastid</keyword>
<keyword id="KW-0793">Thylakoid</keyword>
<keyword id="KW-0812">Transmembrane</keyword>
<keyword id="KW-1133">Transmembrane helix</keyword>
<keyword id="KW-0813">Transport</keyword>
<comment type="function">
    <text evidence="1">F(1)F(0) ATP synthase produces ATP from ADP in the presence of a proton or sodium gradient. F-type ATPases consist of two structural domains, F(1) containing the extramembraneous catalytic core and F(0) containing the membrane proton channel, linked together by a central stalk and a peripheral stalk. During catalysis, ATP synthesis in the catalytic domain of F(1) is coupled via a rotary mechanism of the central stalk subunits to proton translocation.</text>
</comment>
<comment type="function">
    <text evidence="1">Key component of the F(0) channel; it plays a direct role in translocation across the membrane. A homomeric c-ring of between 10-14 subunits forms the central stalk rotor element with the F(1) delta and epsilon subunits.</text>
</comment>
<comment type="subunit">
    <text evidence="1">F-type ATPases have 2 components, F(1) - the catalytic core - and F(0) - the membrane proton channel. F(1) has five subunits: alpha(3), beta(3), gamma(1), delta(1), epsilon(1). F(0) has four main subunits: a(1), b(1), b'(1) and c(10-14). The alpha and beta chains form an alternating ring which encloses part of the gamma chain. F(1) is attached to F(0) by a central stalk formed by the gamma and epsilon chains, while a peripheral stalk is formed by the delta, b and b' chains.</text>
</comment>
<comment type="subcellular location">
    <subcellularLocation>
        <location evidence="1">Plastid</location>
        <location evidence="1">Chloroplast thylakoid membrane</location>
        <topology evidence="1">Multi-pass membrane protein</topology>
    </subcellularLocation>
</comment>
<comment type="miscellaneous">
    <text>In plastids the F-type ATPase is also known as CF(1)CF(0).</text>
</comment>
<comment type="similarity">
    <text evidence="1">Belongs to the ATPase C chain family.</text>
</comment>
<dbReference type="EMBL" id="D17510">
    <property type="protein sequence ID" value="BAA04320.1"/>
    <property type="molecule type" value="Genomic_DNA"/>
</dbReference>
<dbReference type="PIR" id="T07441">
    <property type="entry name" value="T07441"/>
</dbReference>
<dbReference type="RefSeq" id="NP_042362.1">
    <property type="nucleotide sequence ID" value="NC_001631.1"/>
</dbReference>
<dbReference type="SMR" id="P41603"/>
<dbReference type="GeneID" id="809035"/>
<dbReference type="GO" id="GO:0009535">
    <property type="term" value="C:chloroplast thylakoid membrane"/>
    <property type="evidence" value="ECO:0007669"/>
    <property type="project" value="UniProtKB-SubCell"/>
</dbReference>
<dbReference type="GO" id="GO:0045259">
    <property type="term" value="C:proton-transporting ATP synthase complex"/>
    <property type="evidence" value="ECO:0007669"/>
    <property type="project" value="UniProtKB-KW"/>
</dbReference>
<dbReference type="GO" id="GO:0033177">
    <property type="term" value="C:proton-transporting two-sector ATPase complex, proton-transporting domain"/>
    <property type="evidence" value="ECO:0007669"/>
    <property type="project" value="InterPro"/>
</dbReference>
<dbReference type="GO" id="GO:0008289">
    <property type="term" value="F:lipid binding"/>
    <property type="evidence" value="ECO:0007669"/>
    <property type="project" value="UniProtKB-KW"/>
</dbReference>
<dbReference type="GO" id="GO:0046933">
    <property type="term" value="F:proton-transporting ATP synthase activity, rotational mechanism"/>
    <property type="evidence" value="ECO:0007669"/>
    <property type="project" value="UniProtKB-UniRule"/>
</dbReference>
<dbReference type="CDD" id="cd18183">
    <property type="entry name" value="ATP-synt_Fo_c_ATPH"/>
    <property type="match status" value="1"/>
</dbReference>
<dbReference type="FunFam" id="1.20.20.10:FF:000001">
    <property type="entry name" value="ATP synthase subunit c, chloroplastic"/>
    <property type="match status" value="1"/>
</dbReference>
<dbReference type="Gene3D" id="1.20.20.10">
    <property type="entry name" value="F1F0 ATP synthase subunit C"/>
    <property type="match status" value="1"/>
</dbReference>
<dbReference type="HAMAP" id="MF_01396">
    <property type="entry name" value="ATP_synth_c_bact"/>
    <property type="match status" value="1"/>
</dbReference>
<dbReference type="InterPro" id="IPR005953">
    <property type="entry name" value="ATP_synth_csu_bac/chlpt"/>
</dbReference>
<dbReference type="InterPro" id="IPR000454">
    <property type="entry name" value="ATP_synth_F0_csu"/>
</dbReference>
<dbReference type="InterPro" id="IPR020537">
    <property type="entry name" value="ATP_synth_F0_csu_DDCD_BS"/>
</dbReference>
<dbReference type="InterPro" id="IPR038662">
    <property type="entry name" value="ATP_synth_F0_csu_sf"/>
</dbReference>
<dbReference type="InterPro" id="IPR002379">
    <property type="entry name" value="ATPase_proteolipid_c-like_dom"/>
</dbReference>
<dbReference type="InterPro" id="IPR035921">
    <property type="entry name" value="F/V-ATP_Csub_sf"/>
</dbReference>
<dbReference type="NCBIfam" id="TIGR01260">
    <property type="entry name" value="ATP_synt_c"/>
    <property type="match status" value="1"/>
</dbReference>
<dbReference type="NCBIfam" id="NF005608">
    <property type="entry name" value="PRK07354.1"/>
    <property type="match status" value="1"/>
</dbReference>
<dbReference type="PANTHER" id="PTHR10031">
    <property type="entry name" value="ATP SYNTHASE LIPID-BINDING PROTEIN, MITOCHONDRIAL"/>
    <property type="match status" value="1"/>
</dbReference>
<dbReference type="PANTHER" id="PTHR10031:SF48">
    <property type="entry name" value="ATP SYNTHASE SUBUNIT C, CHLOROPLASTIC"/>
    <property type="match status" value="1"/>
</dbReference>
<dbReference type="Pfam" id="PF00137">
    <property type="entry name" value="ATP-synt_C"/>
    <property type="match status" value="1"/>
</dbReference>
<dbReference type="PRINTS" id="PR00124">
    <property type="entry name" value="ATPASEC"/>
</dbReference>
<dbReference type="SUPFAM" id="SSF81333">
    <property type="entry name" value="F1F0 ATP synthase subunit C"/>
    <property type="match status" value="1"/>
</dbReference>
<dbReference type="PROSITE" id="PS00605">
    <property type="entry name" value="ATPASE_C"/>
    <property type="match status" value="1"/>
</dbReference>
<feature type="chain" id="PRO_0000112202" description="ATP synthase subunit c, chloroplastic">
    <location>
        <begin position="1"/>
        <end position="81"/>
    </location>
</feature>
<feature type="transmembrane region" description="Helical" evidence="1">
    <location>
        <begin position="3"/>
        <end position="23"/>
    </location>
</feature>
<feature type="transmembrane region" description="Helical" evidence="1">
    <location>
        <begin position="57"/>
        <end position="77"/>
    </location>
</feature>
<feature type="site" description="Reversibly protonated during proton transport" evidence="1">
    <location>
        <position position="61"/>
    </location>
</feature>
<geneLocation type="chloroplast"/>
<evidence type="ECO:0000255" key="1">
    <source>
        <dbReference type="HAMAP-Rule" id="MF_01396"/>
    </source>
</evidence>
<sequence length="81" mass="8007">MDPLISAASVIAAGLSVGLASIGPGVGQGTAAGQAVEGIARQPEAEGKIRGTLLLSLAFMEALTIYGLVVALALLFANPFV</sequence>
<reference key="1">
    <citation type="journal article" date="1994" name="Proc. Natl. Acad. Sci. U.S.A.">
        <title>Loss of all ndh genes as determined by sequencing the entire chloroplast genome of the black pine Pinus thunbergii.</title>
        <authorList>
            <person name="Wakasugi T."/>
            <person name="Tsudzuki J."/>
            <person name="Ito S."/>
            <person name="Nakashima K."/>
            <person name="Tsudzuki T."/>
            <person name="Sugiura M."/>
        </authorList>
    </citation>
    <scope>NUCLEOTIDE SEQUENCE [LARGE SCALE GENOMIC DNA]</scope>
</reference>
<name>ATPH_PINTH</name>